<organism>
    <name type="scientific">Thermococcus onnurineus (strain NA1)</name>
    <dbReference type="NCBI Taxonomy" id="523850"/>
    <lineage>
        <taxon>Archaea</taxon>
        <taxon>Methanobacteriati</taxon>
        <taxon>Methanobacteriota</taxon>
        <taxon>Thermococci</taxon>
        <taxon>Thermococcales</taxon>
        <taxon>Thermococcaceae</taxon>
        <taxon>Thermococcus</taxon>
    </lineage>
</organism>
<proteinExistence type="inferred from homology"/>
<feature type="chain" id="PRO_1000132350" description="DNA primase small subunit PriS">
    <location>
        <begin position="1"/>
        <end position="346"/>
    </location>
</feature>
<feature type="active site" evidence="1">
    <location>
        <position position="97"/>
    </location>
</feature>
<feature type="active site" evidence="1">
    <location>
        <position position="99"/>
    </location>
</feature>
<feature type="active site" evidence="1">
    <location>
        <position position="278"/>
    </location>
</feature>
<keyword id="KW-0235">DNA replication</keyword>
<keyword id="KW-0240">DNA-directed RNA polymerase</keyword>
<keyword id="KW-0460">Magnesium</keyword>
<keyword id="KW-0464">Manganese</keyword>
<keyword id="KW-0479">Metal-binding</keyword>
<keyword id="KW-0548">Nucleotidyltransferase</keyword>
<keyword id="KW-0639">Primosome</keyword>
<keyword id="KW-0804">Transcription</keyword>
<keyword id="KW-0808">Transferase</keyword>
<evidence type="ECO:0000255" key="1">
    <source>
        <dbReference type="HAMAP-Rule" id="MF_00700"/>
    </source>
</evidence>
<comment type="function">
    <text evidence="1">Catalytic subunit of DNA primase, an RNA polymerase that catalyzes the synthesis of short RNA molecules used as primers for DNA polymerase during DNA replication. The small subunit contains the primase catalytic core and has DNA synthesis activity on its own. Binding to the large subunit stabilizes and modulates the activity, increasing the rate of DNA synthesis while decreasing the length of the DNA fragments, and conferring RNA synthesis capability. The DNA polymerase activity may enable DNA primase to also catalyze primer extension after primer synthesis. May also play a role in DNA repair.</text>
</comment>
<comment type="cofactor">
    <cofactor evidence="1">
        <name>Mg(2+)</name>
        <dbReference type="ChEBI" id="CHEBI:18420"/>
    </cofactor>
    <cofactor evidence="1">
        <name>Mn(2+)</name>
        <dbReference type="ChEBI" id="CHEBI:29035"/>
    </cofactor>
</comment>
<comment type="subunit">
    <text evidence="1">Heterodimer of a small subunit (PriS) and a large subunit (PriL).</text>
</comment>
<comment type="similarity">
    <text evidence="1">Belongs to the eukaryotic-type primase small subunit family.</text>
</comment>
<accession>B6YV39</accession>
<gene>
    <name evidence="1" type="primary">priS</name>
    <name type="synonym">priA</name>
    <name type="ordered locus">TON_1777</name>
</gene>
<protein>
    <recommendedName>
        <fullName evidence="1">DNA primase small subunit PriS</fullName>
        <ecNumber evidence="1">2.7.7.-</ecNumber>
    </recommendedName>
</protein>
<dbReference type="EC" id="2.7.7.-" evidence="1"/>
<dbReference type="EMBL" id="CP000855">
    <property type="protein sequence ID" value="ACJ17267.1"/>
    <property type="molecule type" value="Genomic_DNA"/>
</dbReference>
<dbReference type="RefSeq" id="WP_012572739.1">
    <property type="nucleotide sequence ID" value="NC_011529.1"/>
</dbReference>
<dbReference type="SMR" id="B6YV39"/>
<dbReference type="STRING" id="523850.TON_1777"/>
<dbReference type="GeneID" id="7017446"/>
<dbReference type="KEGG" id="ton:TON_1777"/>
<dbReference type="PATRIC" id="fig|523850.10.peg.1791"/>
<dbReference type="eggNOG" id="arCOG04110">
    <property type="taxonomic scope" value="Archaea"/>
</dbReference>
<dbReference type="HOGENOM" id="CLU_056123_1_0_2"/>
<dbReference type="OrthoDB" id="31125at2157"/>
<dbReference type="Proteomes" id="UP000002727">
    <property type="component" value="Chromosome"/>
</dbReference>
<dbReference type="GO" id="GO:0000428">
    <property type="term" value="C:DNA-directed RNA polymerase complex"/>
    <property type="evidence" value="ECO:0007669"/>
    <property type="project" value="UniProtKB-KW"/>
</dbReference>
<dbReference type="GO" id="GO:1990077">
    <property type="term" value="C:primosome complex"/>
    <property type="evidence" value="ECO:0007669"/>
    <property type="project" value="UniProtKB-KW"/>
</dbReference>
<dbReference type="GO" id="GO:0003899">
    <property type="term" value="F:DNA-directed RNA polymerase activity"/>
    <property type="evidence" value="ECO:0007669"/>
    <property type="project" value="InterPro"/>
</dbReference>
<dbReference type="GO" id="GO:0046872">
    <property type="term" value="F:metal ion binding"/>
    <property type="evidence" value="ECO:0007669"/>
    <property type="project" value="UniProtKB-KW"/>
</dbReference>
<dbReference type="GO" id="GO:0006269">
    <property type="term" value="P:DNA replication, synthesis of primer"/>
    <property type="evidence" value="ECO:0007669"/>
    <property type="project" value="UniProtKB-UniRule"/>
</dbReference>
<dbReference type="CDD" id="cd04860">
    <property type="entry name" value="AE_Prim_S"/>
    <property type="match status" value="1"/>
</dbReference>
<dbReference type="Gene3D" id="1.10.8.160">
    <property type="entry name" value="DNA primase S, domain 2"/>
    <property type="match status" value="1"/>
</dbReference>
<dbReference type="Gene3D" id="3.90.920.10">
    <property type="entry name" value="DNA primase, PRIM domain"/>
    <property type="match status" value="1"/>
</dbReference>
<dbReference type="HAMAP" id="MF_00700">
    <property type="entry name" value="DNA_primase_sml_arc"/>
    <property type="match status" value="1"/>
</dbReference>
<dbReference type="InterPro" id="IPR002755">
    <property type="entry name" value="DNA_primase_S"/>
</dbReference>
<dbReference type="InterPro" id="IPR014052">
    <property type="entry name" value="DNA_primase_ssu_euk/arc"/>
</dbReference>
<dbReference type="InterPro" id="IPR023639">
    <property type="entry name" value="DNA_primase_ssu_PriS"/>
</dbReference>
<dbReference type="NCBIfam" id="TIGR00335">
    <property type="entry name" value="primase_sml"/>
    <property type="match status" value="1"/>
</dbReference>
<dbReference type="PANTHER" id="PTHR10536">
    <property type="entry name" value="DNA PRIMASE SMALL SUBUNIT"/>
    <property type="match status" value="1"/>
</dbReference>
<dbReference type="Pfam" id="PF01896">
    <property type="entry name" value="DNA_primase_S"/>
    <property type="match status" value="1"/>
</dbReference>
<dbReference type="SUPFAM" id="SSF56747">
    <property type="entry name" value="Prim-pol domain"/>
    <property type="match status" value="1"/>
</dbReference>
<name>PRIS_THEON</name>
<reference key="1">
    <citation type="journal article" date="2008" name="J. Bacteriol.">
        <title>The complete genome sequence of Thermococcus onnurineus NA1 reveals a mixed heterotrophic and carboxydotrophic metabolism.</title>
        <authorList>
            <person name="Lee H.S."/>
            <person name="Kang S.G."/>
            <person name="Bae S.S."/>
            <person name="Lim J.K."/>
            <person name="Cho Y."/>
            <person name="Kim Y.J."/>
            <person name="Jeon J.H."/>
            <person name="Cha S.-S."/>
            <person name="Kwon K.K."/>
            <person name="Kim H.-T."/>
            <person name="Park C.-J."/>
            <person name="Lee H.-W."/>
            <person name="Kim S.I."/>
            <person name="Chun J."/>
            <person name="Colwell R.R."/>
            <person name="Kim S.-J."/>
            <person name="Lee J.-H."/>
        </authorList>
    </citation>
    <scope>NUCLEOTIDE SEQUENCE [LARGE SCALE GENOMIC DNA]</scope>
    <source>
        <strain>NA1</strain>
    </source>
</reference>
<sequence>MAELFREVTKEERVLYYKAEWNAKKLPRFLVEKLENREFGFDHTGEGPSDRKNVFMDVRDLEDYIKATAPYAIYSSVALYEDPKGMSGWLGAELVFDIDAKDLPLRRCGHIHEHGKVCPICLGDAKELARDTLVILKEDFGFEDVHVVYSGRGYHIRVLDDWAIQLDSKSREKILAYISAAEEVTFEDIQSRKIMLSSGYFRVFRLRFGYFIARANENHLLNIGLRKGQVKKILESRDEIYEGFVRKGLLTAFPQGIGYKTLARLFALSSTFSKAYFDGRVTVDVKRILRVPSSLHSKVGLVATYIGSDERKLEKFNPFRDAVPKFREEEVKEAYEEWLELHGDEL</sequence>